<gene>
    <name evidence="1" type="primary">nadK</name>
    <name type="ordered locus">PGN_0670</name>
</gene>
<evidence type="ECO:0000255" key="1">
    <source>
        <dbReference type="HAMAP-Rule" id="MF_00361"/>
    </source>
</evidence>
<reference key="1">
    <citation type="journal article" date="2008" name="DNA Res.">
        <title>Determination of the genome sequence of Porphyromonas gingivalis strain ATCC 33277 and genomic comparison with strain W83 revealed extensive genome rearrangements in P. gingivalis.</title>
        <authorList>
            <person name="Naito M."/>
            <person name="Hirakawa H."/>
            <person name="Yamashita A."/>
            <person name="Ohara N."/>
            <person name="Shoji M."/>
            <person name="Yukitake H."/>
            <person name="Nakayama K."/>
            <person name="Toh H."/>
            <person name="Yoshimura F."/>
            <person name="Kuhara S."/>
            <person name="Hattori M."/>
            <person name="Hayashi T."/>
            <person name="Nakayama K."/>
        </authorList>
    </citation>
    <scope>NUCLEOTIDE SEQUENCE [LARGE SCALE GENOMIC DNA]</scope>
    <source>
        <strain>ATCC 33277 / DSM 20709 / CIP 103683 / JCM 12257 / NCTC 11834 / 2561</strain>
    </source>
</reference>
<comment type="function">
    <text evidence="1">Involved in the regulation of the intracellular balance of NAD and NADP, and is a key enzyme in the biosynthesis of NADP. Catalyzes specifically the phosphorylation on 2'-hydroxyl of the adenosine moiety of NAD to yield NADP.</text>
</comment>
<comment type="catalytic activity">
    <reaction evidence="1">
        <text>NAD(+) + ATP = ADP + NADP(+) + H(+)</text>
        <dbReference type="Rhea" id="RHEA:18629"/>
        <dbReference type="ChEBI" id="CHEBI:15378"/>
        <dbReference type="ChEBI" id="CHEBI:30616"/>
        <dbReference type="ChEBI" id="CHEBI:57540"/>
        <dbReference type="ChEBI" id="CHEBI:58349"/>
        <dbReference type="ChEBI" id="CHEBI:456216"/>
        <dbReference type="EC" id="2.7.1.23"/>
    </reaction>
</comment>
<comment type="cofactor">
    <cofactor evidence="1">
        <name>a divalent metal cation</name>
        <dbReference type="ChEBI" id="CHEBI:60240"/>
    </cofactor>
</comment>
<comment type="subcellular location">
    <subcellularLocation>
        <location evidence="1">Cytoplasm</location>
    </subcellularLocation>
</comment>
<comment type="similarity">
    <text evidence="1">Belongs to the NAD kinase family.</text>
</comment>
<organism>
    <name type="scientific">Porphyromonas gingivalis (strain ATCC 33277 / DSM 20709 / CIP 103683 / JCM 12257 / NCTC 11834 / 2561)</name>
    <dbReference type="NCBI Taxonomy" id="431947"/>
    <lineage>
        <taxon>Bacteria</taxon>
        <taxon>Pseudomonadati</taxon>
        <taxon>Bacteroidota</taxon>
        <taxon>Bacteroidia</taxon>
        <taxon>Bacteroidales</taxon>
        <taxon>Porphyromonadaceae</taxon>
        <taxon>Porphyromonas</taxon>
    </lineage>
</organism>
<name>NADK_PORG3</name>
<dbReference type="EC" id="2.7.1.23" evidence="1"/>
<dbReference type="EMBL" id="AP009380">
    <property type="protein sequence ID" value="BAG33189.1"/>
    <property type="molecule type" value="Genomic_DNA"/>
</dbReference>
<dbReference type="RefSeq" id="WP_012457686.1">
    <property type="nucleotide sequence ID" value="NC_010729.1"/>
</dbReference>
<dbReference type="SMR" id="B2RIJ4"/>
<dbReference type="GeneID" id="29255893"/>
<dbReference type="KEGG" id="pgn:PGN_0670"/>
<dbReference type="eggNOG" id="COG0061">
    <property type="taxonomic scope" value="Bacteria"/>
</dbReference>
<dbReference type="HOGENOM" id="CLU_008831_0_3_10"/>
<dbReference type="OrthoDB" id="9774737at2"/>
<dbReference type="BioCyc" id="PGIN431947:G1G2V-736-MONOMER"/>
<dbReference type="Proteomes" id="UP000008842">
    <property type="component" value="Chromosome"/>
</dbReference>
<dbReference type="GO" id="GO:0005737">
    <property type="term" value="C:cytoplasm"/>
    <property type="evidence" value="ECO:0007669"/>
    <property type="project" value="UniProtKB-SubCell"/>
</dbReference>
<dbReference type="GO" id="GO:0005524">
    <property type="term" value="F:ATP binding"/>
    <property type="evidence" value="ECO:0007669"/>
    <property type="project" value="UniProtKB-KW"/>
</dbReference>
<dbReference type="GO" id="GO:0046872">
    <property type="term" value="F:metal ion binding"/>
    <property type="evidence" value="ECO:0007669"/>
    <property type="project" value="UniProtKB-UniRule"/>
</dbReference>
<dbReference type="GO" id="GO:0051287">
    <property type="term" value="F:NAD binding"/>
    <property type="evidence" value="ECO:0007669"/>
    <property type="project" value="UniProtKB-ARBA"/>
</dbReference>
<dbReference type="GO" id="GO:0003951">
    <property type="term" value="F:NAD+ kinase activity"/>
    <property type="evidence" value="ECO:0007669"/>
    <property type="project" value="UniProtKB-UniRule"/>
</dbReference>
<dbReference type="GO" id="GO:0019674">
    <property type="term" value="P:NAD metabolic process"/>
    <property type="evidence" value="ECO:0007669"/>
    <property type="project" value="InterPro"/>
</dbReference>
<dbReference type="GO" id="GO:0006741">
    <property type="term" value="P:NADP biosynthetic process"/>
    <property type="evidence" value="ECO:0007669"/>
    <property type="project" value="UniProtKB-UniRule"/>
</dbReference>
<dbReference type="Gene3D" id="3.40.50.10330">
    <property type="entry name" value="Probable inorganic polyphosphate/atp-NAD kinase, domain 1"/>
    <property type="match status" value="1"/>
</dbReference>
<dbReference type="Gene3D" id="2.60.200.30">
    <property type="entry name" value="Probable inorganic polyphosphate/atp-NAD kinase, domain 2"/>
    <property type="match status" value="1"/>
</dbReference>
<dbReference type="HAMAP" id="MF_00361">
    <property type="entry name" value="NAD_kinase"/>
    <property type="match status" value="1"/>
</dbReference>
<dbReference type="InterPro" id="IPR017438">
    <property type="entry name" value="ATP-NAD_kinase_N"/>
</dbReference>
<dbReference type="InterPro" id="IPR017437">
    <property type="entry name" value="ATP-NAD_kinase_PpnK-typ_C"/>
</dbReference>
<dbReference type="InterPro" id="IPR016064">
    <property type="entry name" value="NAD/diacylglycerol_kinase_sf"/>
</dbReference>
<dbReference type="InterPro" id="IPR002504">
    <property type="entry name" value="NADK"/>
</dbReference>
<dbReference type="NCBIfam" id="NF002521">
    <property type="entry name" value="PRK01911.1"/>
    <property type="match status" value="1"/>
</dbReference>
<dbReference type="PANTHER" id="PTHR20275">
    <property type="entry name" value="NAD KINASE"/>
    <property type="match status" value="1"/>
</dbReference>
<dbReference type="PANTHER" id="PTHR20275:SF0">
    <property type="entry name" value="NAD KINASE"/>
    <property type="match status" value="1"/>
</dbReference>
<dbReference type="Pfam" id="PF01513">
    <property type="entry name" value="NAD_kinase"/>
    <property type="match status" value="1"/>
</dbReference>
<dbReference type="Pfam" id="PF20143">
    <property type="entry name" value="NAD_kinase_C"/>
    <property type="match status" value="1"/>
</dbReference>
<dbReference type="SUPFAM" id="SSF111331">
    <property type="entry name" value="NAD kinase/diacylglycerol kinase-like"/>
    <property type="match status" value="1"/>
</dbReference>
<keyword id="KW-0067">ATP-binding</keyword>
<keyword id="KW-0963">Cytoplasm</keyword>
<keyword id="KW-0418">Kinase</keyword>
<keyword id="KW-0520">NAD</keyword>
<keyword id="KW-0521">NADP</keyword>
<keyword id="KW-0547">Nucleotide-binding</keyword>
<keyword id="KW-0808">Transferase</keyword>
<sequence>MKKIAIFGSRHKSEQGASIKALILKLEEAGTPLYIERKFLSFLEQDLDFHPAICGVIDTLPEHIDYVICMGGDGTFLRTAHQIGVSQIPVLGVNTGRLGFLTDVDCHEASELITRLLDGDFTIETRSLLEVTEDNGSSPSYALNEAAILKRETGSMIRVNACLNDDYLAAYDADGLVVATPSGSTAYSLSGNGPIIMPACRNFVLTPIAPHSLNMRPLVVPDDTAIRLEVDSRSRNYLLVLDGRTRTLPCDTSILLKRAPHTLRMIRLRPHSFAETLRRKLMWGAAVR</sequence>
<accession>B2RIJ4</accession>
<feature type="chain" id="PRO_1000120876" description="NAD kinase">
    <location>
        <begin position="1"/>
        <end position="288"/>
    </location>
</feature>
<feature type="active site" description="Proton acceptor" evidence="1">
    <location>
        <position position="73"/>
    </location>
</feature>
<feature type="binding site" evidence="1">
    <location>
        <begin position="73"/>
        <end position="74"/>
    </location>
    <ligand>
        <name>NAD(+)</name>
        <dbReference type="ChEBI" id="CHEBI:57540"/>
    </ligand>
</feature>
<feature type="binding site" evidence="1">
    <location>
        <position position="78"/>
    </location>
    <ligand>
        <name>NAD(+)</name>
        <dbReference type="ChEBI" id="CHEBI:57540"/>
    </ligand>
</feature>
<feature type="binding site" evidence="1">
    <location>
        <begin position="144"/>
        <end position="145"/>
    </location>
    <ligand>
        <name>NAD(+)</name>
        <dbReference type="ChEBI" id="CHEBI:57540"/>
    </ligand>
</feature>
<feature type="binding site" evidence="1">
    <location>
        <position position="174"/>
    </location>
    <ligand>
        <name>NAD(+)</name>
        <dbReference type="ChEBI" id="CHEBI:57540"/>
    </ligand>
</feature>
<feature type="binding site" evidence="1">
    <location>
        <begin position="185"/>
        <end position="190"/>
    </location>
    <ligand>
        <name>NAD(+)</name>
        <dbReference type="ChEBI" id="CHEBI:57540"/>
    </ligand>
</feature>
<feature type="binding site" evidence="1">
    <location>
        <position position="209"/>
    </location>
    <ligand>
        <name>NAD(+)</name>
        <dbReference type="ChEBI" id="CHEBI:57540"/>
    </ligand>
</feature>
<proteinExistence type="inferred from homology"/>
<protein>
    <recommendedName>
        <fullName evidence="1">NAD kinase</fullName>
        <ecNumber evidence="1">2.7.1.23</ecNumber>
    </recommendedName>
    <alternativeName>
        <fullName evidence="1">ATP-dependent NAD kinase</fullName>
    </alternativeName>
</protein>